<name>RPIA_DICNV</name>
<feature type="chain" id="PRO_1000077064" description="Ribose-5-phosphate isomerase A">
    <location>
        <begin position="1"/>
        <end position="218"/>
    </location>
</feature>
<feature type="active site" description="Proton acceptor" evidence="1">
    <location>
        <position position="103"/>
    </location>
</feature>
<feature type="binding site" evidence="1">
    <location>
        <begin position="28"/>
        <end position="31"/>
    </location>
    <ligand>
        <name>substrate</name>
    </ligand>
</feature>
<feature type="binding site" evidence="1">
    <location>
        <begin position="81"/>
        <end position="84"/>
    </location>
    <ligand>
        <name>substrate</name>
    </ligand>
</feature>
<feature type="binding site" evidence="1">
    <location>
        <begin position="94"/>
        <end position="97"/>
    </location>
    <ligand>
        <name>substrate</name>
    </ligand>
</feature>
<feature type="binding site" evidence="1">
    <location>
        <position position="121"/>
    </location>
    <ligand>
        <name>substrate</name>
    </ligand>
</feature>
<sequence length="218" mass="23848">MNQQLLKEKVAAAVLEHVPENITLGVGSGSTVLCFIEALKQAKRQFRDIVAASETSSKALEAAGFRVRDLNACDPPDIYVDGADEINDDKIMIKGGGAALTREKIIASAAKEFICIIDESKKVAQLGRFPVAVEVIPMARSYVAREIVKLGAEPRWRQGVVTDNGHWILDVHYLDLTAAERMEARINTIAGVVECGIFAQRRADKVLMSQSDGEIVLW</sequence>
<dbReference type="EC" id="5.3.1.6" evidence="1"/>
<dbReference type="EMBL" id="CP000513">
    <property type="protein sequence ID" value="ABQ13130.1"/>
    <property type="molecule type" value="Genomic_DNA"/>
</dbReference>
<dbReference type="RefSeq" id="WP_012030857.1">
    <property type="nucleotide sequence ID" value="NC_009446.1"/>
</dbReference>
<dbReference type="SMR" id="A5EVM0"/>
<dbReference type="STRING" id="246195.DNO_0522"/>
<dbReference type="KEGG" id="dno:DNO_0522"/>
<dbReference type="eggNOG" id="COG0120">
    <property type="taxonomic scope" value="Bacteria"/>
</dbReference>
<dbReference type="HOGENOM" id="CLU_056590_1_1_6"/>
<dbReference type="OrthoDB" id="5870696at2"/>
<dbReference type="UniPathway" id="UPA00115">
    <property type="reaction ID" value="UER00412"/>
</dbReference>
<dbReference type="Proteomes" id="UP000000248">
    <property type="component" value="Chromosome"/>
</dbReference>
<dbReference type="GO" id="GO:0005829">
    <property type="term" value="C:cytosol"/>
    <property type="evidence" value="ECO:0007669"/>
    <property type="project" value="TreeGrafter"/>
</dbReference>
<dbReference type="GO" id="GO:0004751">
    <property type="term" value="F:ribose-5-phosphate isomerase activity"/>
    <property type="evidence" value="ECO:0007669"/>
    <property type="project" value="UniProtKB-UniRule"/>
</dbReference>
<dbReference type="GO" id="GO:0006014">
    <property type="term" value="P:D-ribose metabolic process"/>
    <property type="evidence" value="ECO:0007669"/>
    <property type="project" value="TreeGrafter"/>
</dbReference>
<dbReference type="GO" id="GO:0009052">
    <property type="term" value="P:pentose-phosphate shunt, non-oxidative branch"/>
    <property type="evidence" value="ECO:0007669"/>
    <property type="project" value="UniProtKB-UniRule"/>
</dbReference>
<dbReference type="CDD" id="cd01398">
    <property type="entry name" value="RPI_A"/>
    <property type="match status" value="1"/>
</dbReference>
<dbReference type="FunFam" id="3.40.50.1360:FF:000001">
    <property type="entry name" value="Ribose-5-phosphate isomerase A"/>
    <property type="match status" value="1"/>
</dbReference>
<dbReference type="Gene3D" id="3.30.70.260">
    <property type="match status" value="1"/>
</dbReference>
<dbReference type="Gene3D" id="3.40.50.1360">
    <property type="match status" value="1"/>
</dbReference>
<dbReference type="HAMAP" id="MF_00170">
    <property type="entry name" value="Rib_5P_isom_A"/>
    <property type="match status" value="1"/>
</dbReference>
<dbReference type="InterPro" id="IPR037171">
    <property type="entry name" value="NagB/RpiA_transferase-like"/>
</dbReference>
<dbReference type="InterPro" id="IPR020672">
    <property type="entry name" value="Ribose5P_isomerase_typA_subgr"/>
</dbReference>
<dbReference type="InterPro" id="IPR004788">
    <property type="entry name" value="Ribose5P_isomerase_type_A"/>
</dbReference>
<dbReference type="NCBIfam" id="NF001924">
    <property type="entry name" value="PRK00702.1"/>
    <property type="match status" value="1"/>
</dbReference>
<dbReference type="NCBIfam" id="TIGR00021">
    <property type="entry name" value="rpiA"/>
    <property type="match status" value="1"/>
</dbReference>
<dbReference type="PANTHER" id="PTHR11934">
    <property type="entry name" value="RIBOSE-5-PHOSPHATE ISOMERASE"/>
    <property type="match status" value="1"/>
</dbReference>
<dbReference type="PANTHER" id="PTHR11934:SF0">
    <property type="entry name" value="RIBOSE-5-PHOSPHATE ISOMERASE"/>
    <property type="match status" value="1"/>
</dbReference>
<dbReference type="Pfam" id="PF06026">
    <property type="entry name" value="Rib_5-P_isom_A"/>
    <property type="match status" value="1"/>
</dbReference>
<dbReference type="SUPFAM" id="SSF75445">
    <property type="entry name" value="D-ribose-5-phosphate isomerase (RpiA), lid domain"/>
    <property type="match status" value="1"/>
</dbReference>
<dbReference type="SUPFAM" id="SSF100950">
    <property type="entry name" value="NagB/RpiA/CoA transferase-like"/>
    <property type="match status" value="1"/>
</dbReference>
<comment type="function">
    <text evidence="1">Catalyzes the reversible conversion of ribose-5-phosphate to ribulose 5-phosphate.</text>
</comment>
<comment type="catalytic activity">
    <reaction evidence="1">
        <text>aldehydo-D-ribose 5-phosphate = D-ribulose 5-phosphate</text>
        <dbReference type="Rhea" id="RHEA:14657"/>
        <dbReference type="ChEBI" id="CHEBI:58121"/>
        <dbReference type="ChEBI" id="CHEBI:58273"/>
        <dbReference type="EC" id="5.3.1.6"/>
    </reaction>
</comment>
<comment type="pathway">
    <text evidence="1">Carbohydrate degradation; pentose phosphate pathway; D-ribose 5-phosphate from D-ribulose 5-phosphate (non-oxidative stage): step 1/1.</text>
</comment>
<comment type="subunit">
    <text evidence="1">Homodimer.</text>
</comment>
<comment type="similarity">
    <text evidence="1">Belongs to the ribose 5-phosphate isomerase family.</text>
</comment>
<accession>A5EVM0</accession>
<keyword id="KW-0413">Isomerase</keyword>
<keyword id="KW-1185">Reference proteome</keyword>
<gene>
    <name evidence="1" type="primary">rpiA</name>
    <name type="ordered locus">DNO_0522</name>
</gene>
<evidence type="ECO:0000255" key="1">
    <source>
        <dbReference type="HAMAP-Rule" id="MF_00170"/>
    </source>
</evidence>
<reference key="1">
    <citation type="journal article" date="2007" name="Nat. Biotechnol.">
        <title>Genome sequence and identification of candidate vaccine antigens from the animal pathogen Dichelobacter nodosus.</title>
        <authorList>
            <person name="Myers G.S.A."/>
            <person name="Parker D."/>
            <person name="Al-Hasani K."/>
            <person name="Kennan R.M."/>
            <person name="Seemann T."/>
            <person name="Ren Q."/>
            <person name="Badger J.H."/>
            <person name="Selengut J.D."/>
            <person name="Deboy R.T."/>
            <person name="Tettelin H."/>
            <person name="Boyce J.D."/>
            <person name="McCarl V.P."/>
            <person name="Han X."/>
            <person name="Nelson W.C."/>
            <person name="Madupu R."/>
            <person name="Mohamoud Y."/>
            <person name="Holley T."/>
            <person name="Fedorova N."/>
            <person name="Khouri H."/>
            <person name="Bottomley S.P."/>
            <person name="Whittington R.J."/>
            <person name="Adler B."/>
            <person name="Songer J.G."/>
            <person name="Rood J.I."/>
            <person name="Paulsen I.T."/>
        </authorList>
    </citation>
    <scope>NUCLEOTIDE SEQUENCE [LARGE SCALE GENOMIC DNA]</scope>
    <source>
        <strain>VCS1703A</strain>
    </source>
</reference>
<organism>
    <name type="scientific">Dichelobacter nodosus (strain VCS1703A)</name>
    <dbReference type="NCBI Taxonomy" id="246195"/>
    <lineage>
        <taxon>Bacteria</taxon>
        <taxon>Pseudomonadati</taxon>
        <taxon>Pseudomonadota</taxon>
        <taxon>Gammaproteobacteria</taxon>
        <taxon>Cardiobacteriales</taxon>
        <taxon>Cardiobacteriaceae</taxon>
        <taxon>Dichelobacter</taxon>
    </lineage>
</organism>
<proteinExistence type="inferred from homology"/>
<protein>
    <recommendedName>
        <fullName evidence="1">Ribose-5-phosphate isomerase A</fullName>
        <ecNumber evidence="1">5.3.1.6</ecNumber>
    </recommendedName>
    <alternativeName>
        <fullName evidence="1">Phosphoriboisomerase A</fullName>
        <shortName evidence="1">PRI</shortName>
    </alternativeName>
</protein>